<reference key="1">
    <citation type="journal article" date="2007" name="PLoS Genet.">
        <title>Patterns and implications of gene gain and loss in the evolution of Prochlorococcus.</title>
        <authorList>
            <person name="Kettler G.C."/>
            <person name="Martiny A.C."/>
            <person name="Huang K."/>
            <person name="Zucker J."/>
            <person name="Coleman M.L."/>
            <person name="Rodrigue S."/>
            <person name="Chen F."/>
            <person name="Lapidus A."/>
            <person name="Ferriera S."/>
            <person name="Johnson J."/>
            <person name="Steglich C."/>
            <person name="Church G.M."/>
            <person name="Richardson P."/>
            <person name="Chisholm S.W."/>
        </authorList>
    </citation>
    <scope>NUCLEOTIDE SEQUENCE [LARGE SCALE GENOMIC DNA]</scope>
    <source>
        <strain>NATL2A</strain>
    </source>
</reference>
<dbReference type="EMBL" id="CP000095">
    <property type="protein sequence ID" value="AAZ59153.1"/>
    <property type="molecule type" value="Genomic_DNA"/>
</dbReference>
<dbReference type="RefSeq" id="WP_011294298.1">
    <property type="nucleotide sequence ID" value="NC_007335.2"/>
</dbReference>
<dbReference type="SMR" id="Q46H79"/>
<dbReference type="STRING" id="59920.PMN2A_1665"/>
<dbReference type="KEGG" id="pmn:PMN2A_1665"/>
<dbReference type="HOGENOM" id="CLU_2829784_0_0_3"/>
<dbReference type="OrthoDB" id="466474at2"/>
<dbReference type="PhylomeDB" id="Q46H79"/>
<dbReference type="Proteomes" id="UP000002535">
    <property type="component" value="Chromosome"/>
</dbReference>
<dbReference type="GO" id="GO:0009539">
    <property type="term" value="C:photosystem II reaction center"/>
    <property type="evidence" value="ECO:0007669"/>
    <property type="project" value="InterPro"/>
</dbReference>
<dbReference type="GO" id="GO:0031676">
    <property type="term" value="C:plasma membrane-derived thylakoid membrane"/>
    <property type="evidence" value="ECO:0007669"/>
    <property type="project" value="UniProtKB-SubCell"/>
</dbReference>
<dbReference type="GO" id="GO:0015979">
    <property type="term" value="P:photosynthesis"/>
    <property type="evidence" value="ECO:0007669"/>
    <property type="project" value="UniProtKB-UniRule"/>
</dbReference>
<dbReference type="Gene3D" id="6.10.250.2070">
    <property type="match status" value="1"/>
</dbReference>
<dbReference type="HAMAP" id="MF_01305">
    <property type="entry name" value="PSII_PsbJ"/>
    <property type="match status" value="1"/>
</dbReference>
<dbReference type="InterPro" id="IPR002682">
    <property type="entry name" value="PSII_PsbJ"/>
</dbReference>
<dbReference type="InterPro" id="IPR037267">
    <property type="entry name" value="PSII_PsbJ_sf"/>
</dbReference>
<dbReference type="NCBIfam" id="NF002722">
    <property type="entry name" value="PRK02565.1"/>
    <property type="match status" value="1"/>
</dbReference>
<dbReference type="PANTHER" id="PTHR34812">
    <property type="entry name" value="PHOTOSYSTEM II REACTION CENTER PROTEIN J"/>
    <property type="match status" value="1"/>
</dbReference>
<dbReference type="PANTHER" id="PTHR34812:SF3">
    <property type="entry name" value="PHOTOSYSTEM II REACTION CENTER PROTEIN J"/>
    <property type="match status" value="1"/>
</dbReference>
<dbReference type="Pfam" id="PF01788">
    <property type="entry name" value="PsbJ"/>
    <property type="match status" value="1"/>
</dbReference>
<dbReference type="SUPFAM" id="SSF161021">
    <property type="entry name" value="Photosystem II reaction center protein J, PsbJ"/>
    <property type="match status" value="1"/>
</dbReference>
<gene>
    <name evidence="1" type="primary">psbJ</name>
    <name type="ordered locus">PMN2A_1665</name>
</gene>
<keyword id="KW-0472">Membrane</keyword>
<keyword id="KW-0602">Photosynthesis</keyword>
<keyword id="KW-0604">Photosystem II</keyword>
<keyword id="KW-0674">Reaction center</keyword>
<keyword id="KW-1185">Reference proteome</keyword>
<keyword id="KW-0793">Thylakoid</keyword>
<keyword id="KW-0812">Transmembrane</keyword>
<keyword id="KW-1133">Transmembrane helix</keyword>
<evidence type="ECO:0000255" key="1">
    <source>
        <dbReference type="HAMAP-Rule" id="MF_01305"/>
    </source>
</evidence>
<evidence type="ECO:0000305" key="2"/>
<sequence length="65" mass="6856">MSKLKGPDGRAGDRLPNGMPAVSWERRWTEGALPLWLVATAGGTAVIFVLGIFFYGSYTGIGNAG</sequence>
<proteinExistence type="inferred from homology"/>
<feature type="chain" id="PRO_0000292233" description="Photosystem II reaction center protein J">
    <location>
        <begin position="1"/>
        <end position="65"/>
    </location>
</feature>
<feature type="transmembrane region" description="Helical" evidence="1">
    <location>
        <begin position="35"/>
        <end position="55"/>
    </location>
</feature>
<name>PSBJ_PROMT</name>
<protein>
    <recommendedName>
        <fullName evidence="1">Photosystem II reaction center protein J</fullName>
        <shortName evidence="1">PSII-J</shortName>
    </recommendedName>
</protein>
<accession>Q46H79</accession>
<organism>
    <name type="scientific">Prochlorococcus marinus (strain NATL2A)</name>
    <dbReference type="NCBI Taxonomy" id="59920"/>
    <lineage>
        <taxon>Bacteria</taxon>
        <taxon>Bacillati</taxon>
        <taxon>Cyanobacteriota</taxon>
        <taxon>Cyanophyceae</taxon>
        <taxon>Synechococcales</taxon>
        <taxon>Prochlorococcaceae</taxon>
        <taxon>Prochlorococcus</taxon>
    </lineage>
</organism>
<comment type="function">
    <text evidence="1">One of the components of the core complex of photosystem II (PSII). PSII is a light-driven water:plastoquinone oxidoreductase that uses light energy to abstract electrons from H(2)O, generating O(2) and a proton gradient subsequently used for ATP formation. It consists of a core antenna complex that captures photons, and an electron transfer chain that converts photonic excitation into a charge separation.</text>
</comment>
<comment type="subunit">
    <text evidence="2">PSII is composed of 1 copy each of membrane proteins PsbA, PsbB, PsbC, PsbD, PsbE, PsbF, PsbH, PsbI, PsbJ, PsbK, PsbL, PsbM, PsbT, PsbX, PsbY, Psb30/Ycf12, peripheral proteins PsbO, CyanoQ (PsbQ), PsbU, PsbV and a large number of cofactors. It forms dimeric complexes.</text>
</comment>
<comment type="subcellular location">
    <subcellularLocation>
        <location evidence="1">Cellular thylakoid membrane</location>
        <topology evidence="1">Single-pass membrane protein</topology>
    </subcellularLocation>
</comment>
<comment type="similarity">
    <text evidence="1">Belongs to the PsbJ family.</text>
</comment>